<sequence>MTAITEKETSKFVRIQDGDLDLNIHYNDCGEGKETVVMLHGSGPGASGWANFNRNIEPLVNAGFRVILMDCPGWSKSDSIVSTGSRSDLNARVLKGLVDKLDLDKIHILGNSMGGHTAVAFSLTWPERVGKLVLMGGGTGGVSPFVPMPSEGIKLLNGLYREPTIENLKKMMSIFVYDTSDLTEELFQTRLDNMLARKDHLENFTASLAANLKQFPDFGHRLGEINAETLVIWGRNDRFVPLDTGLRLVAGISNSQLHVFNKCGHWAQWEHADTFNRMVLDFLTH</sequence>
<comment type="function">
    <text evidence="1">Catalyzes the cleavage of the C5-C6 bond of 2-hydroxy-6-oxononadienedioate and 2-hydroxy-6-oxononatrienedioate, a dienol ring fission product of the bacterial meta-cleavage pathway for degradation of phenylpropionic acid.</text>
</comment>
<comment type="catalytic activity">
    <reaction evidence="1">
        <text>(2Z,4E)-2-hydroxy-6-oxonona-2,4-dienedioate + H2O = (2Z)-2-hydroxypenta-2,4-dienoate + succinate + H(+)</text>
        <dbReference type="Rhea" id="RHEA:34187"/>
        <dbReference type="ChEBI" id="CHEBI:15377"/>
        <dbReference type="ChEBI" id="CHEBI:15378"/>
        <dbReference type="ChEBI" id="CHEBI:30031"/>
        <dbReference type="ChEBI" id="CHEBI:66887"/>
        <dbReference type="ChEBI" id="CHEBI:67152"/>
        <dbReference type="EC" id="3.7.1.14"/>
    </reaction>
</comment>
<comment type="catalytic activity">
    <reaction evidence="1">
        <text>(2Z,4E,7E)-2-hydroxy-6-oxonona-2,4,7-trienedioate + H2O = (2Z)-2-hydroxypenta-2,4-dienoate + fumarate + H(+)</text>
        <dbReference type="Rhea" id="RHEA:34191"/>
        <dbReference type="ChEBI" id="CHEBI:15377"/>
        <dbReference type="ChEBI" id="CHEBI:15378"/>
        <dbReference type="ChEBI" id="CHEBI:29806"/>
        <dbReference type="ChEBI" id="CHEBI:66888"/>
        <dbReference type="ChEBI" id="CHEBI:67152"/>
        <dbReference type="EC" id="3.7.1.14"/>
    </reaction>
</comment>
<comment type="pathway">
    <text evidence="1">Aromatic compound metabolism; 3-phenylpropanoate degradation.</text>
</comment>
<comment type="subunit">
    <text evidence="1">Homodimer.</text>
</comment>
<comment type="similarity">
    <text evidence="1">Belongs to the AB hydrolase superfamily. MhpC family.</text>
</comment>
<comment type="sequence caution" evidence="2">
    <conflict type="erroneous initiation">
        <sequence resource="EMBL-CDS" id="AAX50133"/>
    </conflict>
    <text>Truncated N-terminus.</text>
</comment>
<name>MHPC1_PSEPU</name>
<evidence type="ECO:0000255" key="1">
    <source>
        <dbReference type="HAMAP-Rule" id="MF_01654"/>
    </source>
</evidence>
<evidence type="ECO:0000305" key="2"/>
<accession>Q49KF8</accession>
<dbReference type="EC" id="3.7.1.14" evidence="1"/>
<dbReference type="EMBL" id="AY831461">
    <property type="protein sequence ID" value="AAX50133.1"/>
    <property type="status" value="ALT_INIT"/>
    <property type="molecule type" value="Genomic_DNA"/>
</dbReference>
<dbReference type="SMR" id="Q49KF8"/>
<dbReference type="ESTHER" id="psepu-mhpc1">
    <property type="family name" value="Carbon-carbon_bond_hydrolase"/>
</dbReference>
<dbReference type="UniPathway" id="UPA00714"/>
<dbReference type="GO" id="GO:0005737">
    <property type="term" value="C:cytoplasm"/>
    <property type="evidence" value="ECO:0007669"/>
    <property type="project" value="InterPro"/>
</dbReference>
<dbReference type="GO" id="GO:0052823">
    <property type="term" value="F:2-hydroxy-6-oxonona-2,4,7-trienedioate hydrolase activity"/>
    <property type="evidence" value="ECO:0007669"/>
    <property type="project" value="RHEA"/>
</dbReference>
<dbReference type="GO" id="GO:0018771">
    <property type="term" value="F:2-hydroxy-6-oxonona-2,4-dienedioate hydrolase activity"/>
    <property type="evidence" value="ECO:0007669"/>
    <property type="project" value="UniProtKB-UniRule"/>
</dbReference>
<dbReference type="GO" id="GO:0042803">
    <property type="term" value="F:protein homodimerization activity"/>
    <property type="evidence" value="ECO:0007669"/>
    <property type="project" value="InterPro"/>
</dbReference>
<dbReference type="GO" id="GO:0019380">
    <property type="term" value="P:3-phenylpropionate catabolic process"/>
    <property type="evidence" value="ECO:0007669"/>
    <property type="project" value="UniProtKB-UniRule"/>
</dbReference>
<dbReference type="Gene3D" id="3.40.50.1820">
    <property type="entry name" value="alpha/beta hydrolase"/>
    <property type="match status" value="1"/>
</dbReference>
<dbReference type="HAMAP" id="MF_01654">
    <property type="entry name" value="MhpC"/>
    <property type="match status" value="1"/>
</dbReference>
<dbReference type="InterPro" id="IPR000073">
    <property type="entry name" value="AB_hydrolase_1"/>
</dbReference>
<dbReference type="InterPro" id="IPR029058">
    <property type="entry name" value="AB_hydrolase_fold"/>
</dbReference>
<dbReference type="InterPro" id="IPR023791">
    <property type="entry name" value="MhpC_alpha/beta_hydrolase"/>
</dbReference>
<dbReference type="PANTHER" id="PTHR43689:SF8">
    <property type="entry name" value="ALPHA_BETA-HYDROLASES SUPERFAMILY PROTEIN"/>
    <property type="match status" value="1"/>
</dbReference>
<dbReference type="PANTHER" id="PTHR43689">
    <property type="entry name" value="HYDROLASE"/>
    <property type="match status" value="1"/>
</dbReference>
<dbReference type="Pfam" id="PF00561">
    <property type="entry name" value="Abhydrolase_1"/>
    <property type="match status" value="1"/>
</dbReference>
<dbReference type="PRINTS" id="PR00111">
    <property type="entry name" value="ABHYDROLASE"/>
</dbReference>
<dbReference type="SUPFAM" id="SSF53474">
    <property type="entry name" value="alpha/beta-Hydrolases"/>
    <property type="match status" value="1"/>
</dbReference>
<feature type="chain" id="PRO_0000337784" description="2-hydroxy-6-oxononadienedioate/2-hydroxy-6-oxononatrienedioate hydrolase 1">
    <location>
        <begin position="1"/>
        <end position="285"/>
    </location>
</feature>
<feature type="active site" description="Proton acceptor" evidence="1">
    <location>
        <position position="265"/>
    </location>
</feature>
<feature type="site" description="Transition state stabilizer" evidence="1">
    <location>
        <position position="112"/>
    </location>
</feature>
<feature type="site" description="Catalytic role in ketonization of the dienol substrate (substrate destabilization)" evidence="1">
    <location>
        <position position="190"/>
    </location>
</feature>
<proteinExistence type="inferred from homology"/>
<geneLocation type="plasmid">
    <name>pKW1</name>
</geneLocation>
<protein>
    <recommendedName>
        <fullName evidence="1">2-hydroxy-6-oxononadienedioate/2-hydroxy-6-oxononatrienedioate hydrolase 1</fullName>
        <ecNumber evidence="1">3.7.1.14</ecNumber>
    </recommendedName>
    <alternativeName>
        <fullName evidence="1">2-hydroxy-6-ketonona-2,4-diene-1,9-dioic acid 5,6-hydrolase 1</fullName>
    </alternativeName>
    <alternativeName>
        <fullName evidence="1">2-hydroxy-6-oxonona-2,4,7-triene-1,9-dioic acid 5,6-hydrolase 1</fullName>
    </alternativeName>
    <alternativeName>
        <fullName evidence="1">2-hydroxy-6-oxonona-2,4-diene-1,9-dioic acid 5,6-hydrolase 1</fullName>
    </alternativeName>
</protein>
<organism>
    <name type="scientific">Pseudomonas putida</name>
    <name type="common">Arthrobacter siderocapsulatus</name>
    <dbReference type="NCBI Taxonomy" id="303"/>
    <lineage>
        <taxon>Bacteria</taxon>
        <taxon>Pseudomonadati</taxon>
        <taxon>Pseudomonadota</taxon>
        <taxon>Gammaproteobacteria</taxon>
        <taxon>Pseudomonadales</taxon>
        <taxon>Pseudomonadaceae</taxon>
        <taxon>Pseudomonas</taxon>
    </lineage>
</organism>
<keyword id="KW-0058">Aromatic hydrocarbons catabolism</keyword>
<keyword id="KW-0378">Hydrolase</keyword>
<keyword id="KW-0614">Plasmid</keyword>
<reference key="1">
    <citation type="submission" date="2004-11" db="EMBL/GenBank/DDBJ databases">
        <title>GJ31 meta-operon.</title>
        <authorList>
            <person name="Reineke W."/>
            <person name="Kunze M."/>
        </authorList>
    </citation>
    <scope>NUCLEOTIDE SEQUENCE [GENOMIC DNA]</scope>
    <source>
        <strain>GJ31</strain>
    </source>
</reference>
<gene>
    <name evidence="1" type="primary">mhpC1</name>
    <name type="synonym">cbzF</name>
</gene>